<feature type="chain" id="PRO_0000266719" description="Small ribosomal subunit protein bS21">
    <location>
        <begin position="1"/>
        <end position="58"/>
    </location>
</feature>
<feature type="region of interest" description="Disordered" evidence="2">
    <location>
        <begin position="25"/>
        <end position="58"/>
    </location>
</feature>
<feature type="compositionally biased region" description="Basic and acidic residues" evidence="2">
    <location>
        <begin position="32"/>
        <end position="43"/>
    </location>
</feature>
<feature type="compositionally biased region" description="Basic residues" evidence="2">
    <location>
        <begin position="44"/>
        <end position="58"/>
    </location>
</feature>
<comment type="similarity">
    <text evidence="1">Belongs to the bacterial ribosomal protein bS21 family.</text>
</comment>
<comment type="sequence caution" evidence="3">
    <conflict type="erroneous initiation">
        <sequence resource="EMBL-CDS" id="BAC13918"/>
    </conflict>
</comment>
<dbReference type="EMBL" id="BA000028">
    <property type="protein sequence ID" value="BAC13918.1"/>
    <property type="status" value="ALT_INIT"/>
    <property type="molecule type" value="Genomic_DNA"/>
</dbReference>
<dbReference type="RefSeq" id="WP_010650937.1">
    <property type="nucleotide sequence ID" value="NC_004193.1"/>
</dbReference>
<dbReference type="SMR" id="Q8EPW9"/>
<dbReference type="STRING" id="221109.gene:10734208"/>
<dbReference type="KEGG" id="oih:OB1962"/>
<dbReference type="eggNOG" id="COG0828">
    <property type="taxonomic scope" value="Bacteria"/>
</dbReference>
<dbReference type="HOGENOM" id="CLU_159258_3_2_9"/>
<dbReference type="OrthoDB" id="9799244at2"/>
<dbReference type="PhylomeDB" id="Q8EPW9"/>
<dbReference type="Proteomes" id="UP000000822">
    <property type="component" value="Chromosome"/>
</dbReference>
<dbReference type="GO" id="GO:1990904">
    <property type="term" value="C:ribonucleoprotein complex"/>
    <property type="evidence" value="ECO:0007669"/>
    <property type="project" value="UniProtKB-KW"/>
</dbReference>
<dbReference type="GO" id="GO:0005840">
    <property type="term" value="C:ribosome"/>
    <property type="evidence" value="ECO:0007669"/>
    <property type="project" value="UniProtKB-KW"/>
</dbReference>
<dbReference type="GO" id="GO:0003735">
    <property type="term" value="F:structural constituent of ribosome"/>
    <property type="evidence" value="ECO:0007669"/>
    <property type="project" value="InterPro"/>
</dbReference>
<dbReference type="GO" id="GO:0006412">
    <property type="term" value="P:translation"/>
    <property type="evidence" value="ECO:0007669"/>
    <property type="project" value="UniProtKB-UniRule"/>
</dbReference>
<dbReference type="Gene3D" id="1.20.5.1150">
    <property type="entry name" value="Ribosomal protein S8"/>
    <property type="match status" value="1"/>
</dbReference>
<dbReference type="HAMAP" id="MF_00358">
    <property type="entry name" value="Ribosomal_bS21"/>
    <property type="match status" value="1"/>
</dbReference>
<dbReference type="InterPro" id="IPR001911">
    <property type="entry name" value="Ribosomal_bS21"/>
</dbReference>
<dbReference type="InterPro" id="IPR018278">
    <property type="entry name" value="Ribosomal_bS21_CS"/>
</dbReference>
<dbReference type="InterPro" id="IPR038380">
    <property type="entry name" value="Ribosomal_bS21_sf"/>
</dbReference>
<dbReference type="NCBIfam" id="TIGR00030">
    <property type="entry name" value="S21p"/>
    <property type="match status" value="1"/>
</dbReference>
<dbReference type="PANTHER" id="PTHR21109">
    <property type="entry name" value="MITOCHONDRIAL 28S RIBOSOMAL PROTEIN S21"/>
    <property type="match status" value="1"/>
</dbReference>
<dbReference type="PANTHER" id="PTHR21109:SF22">
    <property type="entry name" value="SMALL RIBOSOMAL SUBUNIT PROTEIN BS21"/>
    <property type="match status" value="1"/>
</dbReference>
<dbReference type="Pfam" id="PF01165">
    <property type="entry name" value="Ribosomal_S21"/>
    <property type="match status" value="1"/>
</dbReference>
<dbReference type="PRINTS" id="PR00976">
    <property type="entry name" value="RIBOSOMALS21"/>
</dbReference>
<dbReference type="PROSITE" id="PS01181">
    <property type="entry name" value="RIBOSOMAL_S21"/>
    <property type="match status" value="1"/>
</dbReference>
<sequence>MSNTTRVRKNESLEDALRRFKRSVSKSGTLQEYRKREHYEKPSVKRKKKSEAARKRKF</sequence>
<gene>
    <name evidence="1" type="primary">rpsU</name>
    <name type="ordered locus">OB1962</name>
</gene>
<evidence type="ECO:0000255" key="1">
    <source>
        <dbReference type="HAMAP-Rule" id="MF_00358"/>
    </source>
</evidence>
<evidence type="ECO:0000256" key="2">
    <source>
        <dbReference type="SAM" id="MobiDB-lite"/>
    </source>
</evidence>
<evidence type="ECO:0000305" key="3"/>
<name>RS21_OCEIH</name>
<protein>
    <recommendedName>
        <fullName evidence="1">Small ribosomal subunit protein bS21</fullName>
    </recommendedName>
    <alternativeName>
        <fullName evidence="3">30S ribosomal protein S21</fullName>
    </alternativeName>
</protein>
<keyword id="KW-1185">Reference proteome</keyword>
<keyword id="KW-0687">Ribonucleoprotein</keyword>
<keyword id="KW-0689">Ribosomal protein</keyword>
<accession>Q8EPW9</accession>
<proteinExistence type="inferred from homology"/>
<reference key="1">
    <citation type="journal article" date="2002" name="Nucleic Acids Res.">
        <title>Genome sequence of Oceanobacillus iheyensis isolated from the Iheya Ridge and its unexpected adaptive capabilities to extreme environments.</title>
        <authorList>
            <person name="Takami H."/>
            <person name="Takaki Y."/>
            <person name="Uchiyama I."/>
        </authorList>
    </citation>
    <scope>NUCLEOTIDE SEQUENCE [LARGE SCALE GENOMIC DNA]</scope>
    <source>
        <strain>DSM 14371 / CIP 107618 / JCM 11309 / KCTC 3954 / HTE831</strain>
    </source>
</reference>
<organism>
    <name type="scientific">Oceanobacillus iheyensis (strain DSM 14371 / CIP 107618 / JCM 11309 / KCTC 3954 / HTE831)</name>
    <dbReference type="NCBI Taxonomy" id="221109"/>
    <lineage>
        <taxon>Bacteria</taxon>
        <taxon>Bacillati</taxon>
        <taxon>Bacillota</taxon>
        <taxon>Bacilli</taxon>
        <taxon>Bacillales</taxon>
        <taxon>Bacillaceae</taxon>
        <taxon>Oceanobacillus</taxon>
    </lineage>
</organism>